<comment type="function">
    <text>Electron carrier protein. The oxidized form of the cytochrome c heme group can accept an electron from the heme group of the cytochrome c1 subunit of cytochrome reductase. Cytochrome c then transfers this electron to the cytochrome oxidase complex, the final protein carrier in the mitochondrial electron-transport chain.</text>
</comment>
<comment type="subcellular location">
    <subcellularLocation>
        <location>Mitochondrion intermembrane space</location>
    </subcellularLocation>
    <text>Loosely associated with the inner membrane.</text>
</comment>
<comment type="PTM">
    <text>Binds 1 heme c group covalently per subunit.</text>
</comment>
<comment type="similarity">
    <text evidence="3">Belongs to the cytochrome c family.</text>
</comment>
<comment type="online information" name="Protein Spotlight">
    <link uri="https://www.proteinspotlight.org/back_issues/076"/>
    <text>Life shuttle - Issue 76 of November 2006</text>
</comment>
<gene>
    <name type="primary">CC-1</name>
    <name type="ORF">OsI_019322</name>
</gene>
<protein>
    <recommendedName>
        <fullName>Cytochrome c</fullName>
    </recommendedName>
</protein>
<evidence type="ECO:0000250" key="1"/>
<evidence type="ECO:0000255" key="2">
    <source>
        <dbReference type="PROSITE-ProRule" id="PRU00433"/>
    </source>
</evidence>
<evidence type="ECO:0000305" key="3"/>
<name>CYC_ORYSI</name>
<dbReference type="EMBL" id="M63704">
    <property type="protein sequence ID" value="AAA63515.1"/>
    <property type="molecule type" value="Genomic_DNA"/>
</dbReference>
<dbReference type="EMBL" id="CM000130">
    <property type="protein sequence ID" value="EAY98089.1"/>
    <property type="molecule type" value="Genomic_DNA"/>
</dbReference>
<dbReference type="SMR" id="A2Y4S9"/>
<dbReference type="STRING" id="39946.A2Y4S9"/>
<dbReference type="EnsemblPlants" id="BGIOSGA019893-TA">
    <property type="protein sequence ID" value="BGIOSGA019893-PA"/>
    <property type="gene ID" value="BGIOSGA019893"/>
</dbReference>
<dbReference type="EnsemblPlants" id="OsMH63_05G017430_01">
    <property type="protein sequence ID" value="OsMH63_05G017430_01"/>
    <property type="gene ID" value="OsMH63_05G017430"/>
</dbReference>
<dbReference type="EnsemblPlants" id="OsZS97_05G017680_01">
    <property type="protein sequence ID" value="OsZS97_05G017680_01"/>
    <property type="gene ID" value="OsZS97_05G017680"/>
</dbReference>
<dbReference type="Gramene" id="BGIOSGA019893-TA">
    <property type="protein sequence ID" value="BGIOSGA019893-PA"/>
    <property type="gene ID" value="BGIOSGA019893"/>
</dbReference>
<dbReference type="Gramene" id="OsMH63_05G017430_01">
    <property type="protein sequence ID" value="OsMH63_05G017430_01"/>
    <property type="gene ID" value="OsMH63_05G017430"/>
</dbReference>
<dbReference type="Gramene" id="OsZS97_05G017680_01">
    <property type="protein sequence ID" value="OsZS97_05G017680_01"/>
    <property type="gene ID" value="OsZS97_05G017680"/>
</dbReference>
<dbReference type="HOGENOM" id="CLU_060944_3_0_1"/>
<dbReference type="OMA" id="KARCAQC"/>
<dbReference type="Proteomes" id="UP000007015">
    <property type="component" value="Chromosome 5"/>
</dbReference>
<dbReference type="GO" id="GO:0005758">
    <property type="term" value="C:mitochondrial intermembrane space"/>
    <property type="evidence" value="ECO:0007669"/>
    <property type="project" value="UniProtKB-SubCell"/>
</dbReference>
<dbReference type="GO" id="GO:0009055">
    <property type="term" value="F:electron transfer activity"/>
    <property type="evidence" value="ECO:0007669"/>
    <property type="project" value="InterPro"/>
</dbReference>
<dbReference type="GO" id="GO:0020037">
    <property type="term" value="F:heme binding"/>
    <property type="evidence" value="ECO:0007669"/>
    <property type="project" value="InterPro"/>
</dbReference>
<dbReference type="GO" id="GO:0046872">
    <property type="term" value="F:metal ion binding"/>
    <property type="evidence" value="ECO:0007669"/>
    <property type="project" value="UniProtKB-KW"/>
</dbReference>
<dbReference type="FunFam" id="1.10.760.10:FF:000001">
    <property type="entry name" value="Cytochrome c iso-1"/>
    <property type="match status" value="1"/>
</dbReference>
<dbReference type="Gene3D" id="1.10.760.10">
    <property type="entry name" value="Cytochrome c-like domain"/>
    <property type="match status" value="1"/>
</dbReference>
<dbReference type="InterPro" id="IPR009056">
    <property type="entry name" value="Cyt_c-like_dom"/>
</dbReference>
<dbReference type="InterPro" id="IPR036909">
    <property type="entry name" value="Cyt_c-like_dom_sf"/>
</dbReference>
<dbReference type="InterPro" id="IPR002327">
    <property type="entry name" value="Cyt_c_1A/1B"/>
</dbReference>
<dbReference type="PANTHER" id="PTHR11961">
    <property type="entry name" value="CYTOCHROME C"/>
    <property type="match status" value="1"/>
</dbReference>
<dbReference type="Pfam" id="PF00034">
    <property type="entry name" value="Cytochrom_C"/>
    <property type="match status" value="1"/>
</dbReference>
<dbReference type="PRINTS" id="PR00604">
    <property type="entry name" value="CYTCHRMECIAB"/>
</dbReference>
<dbReference type="SUPFAM" id="SSF46626">
    <property type="entry name" value="Cytochrome c"/>
    <property type="match status" value="1"/>
</dbReference>
<dbReference type="PROSITE" id="PS51007">
    <property type="entry name" value="CYTC"/>
    <property type="match status" value="1"/>
</dbReference>
<feature type="initiator methionine" description="Removed" evidence="1">
    <location>
        <position position="1"/>
    </location>
</feature>
<feature type="chain" id="PRO_0000295010" description="Cytochrome c">
    <location>
        <begin position="2"/>
        <end position="112"/>
    </location>
</feature>
<feature type="binding site" description="covalent" evidence="2">
    <location>
        <position position="23"/>
    </location>
    <ligand>
        <name>heme c</name>
        <dbReference type="ChEBI" id="CHEBI:61717"/>
    </ligand>
</feature>
<feature type="binding site" description="covalent" evidence="2">
    <location>
        <position position="26"/>
    </location>
    <ligand>
        <name>heme c</name>
        <dbReference type="ChEBI" id="CHEBI:61717"/>
    </ligand>
</feature>
<feature type="binding site" description="axial binding residue" evidence="2">
    <location>
        <position position="27"/>
    </location>
    <ligand>
        <name>heme c</name>
        <dbReference type="ChEBI" id="CHEBI:61717"/>
    </ligand>
    <ligandPart>
        <name>Fe</name>
        <dbReference type="ChEBI" id="CHEBI:18248"/>
    </ligandPart>
</feature>
<feature type="binding site" description="axial binding residue" evidence="2">
    <location>
        <position position="89"/>
    </location>
    <ligand>
        <name>heme c</name>
        <dbReference type="ChEBI" id="CHEBI:61717"/>
    </ligand>
    <ligandPart>
        <name>Fe</name>
        <dbReference type="ChEBI" id="CHEBI:18248"/>
    </ligandPart>
</feature>
<feature type="modified residue" description="N-acetylalanine" evidence="1">
    <location>
        <position position="2"/>
    </location>
</feature>
<feature type="modified residue" description="N6,N6,N6-trimethyllysine" evidence="1">
    <location>
        <position position="81"/>
    </location>
</feature>
<feature type="modified residue" description="N6,N6,N6-trimethyllysine" evidence="1">
    <location>
        <position position="95"/>
    </location>
</feature>
<reference key="1">
    <citation type="journal article" date="1991" name="Mol. Biol. Evol.">
        <title>Isolation and molecular evolutionary analysis of a cytochrome c gene from Oryza sativa (rice).</title>
        <authorList>
            <person name="Kemmerer E.C."/>
            <person name="Lei M."/>
            <person name="Wu R."/>
        </authorList>
    </citation>
    <scope>NUCLEOTIDE SEQUENCE [GENOMIC DNA]</scope>
    <source>
        <strain>cv. IR36</strain>
    </source>
</reference>
<reference key="2">
    <citation type="journal article" date="2005" name="PLoS Biol.">
        <title>The genomes of Oryza sativa: a history of duplications.</title>
        <authorList>
            <person name="Yu J."/>
            <person name="Wang J."/>
            <person name="Lin W."/>
            <person name="Li S."/>
            <person name="Li H."/>
            <person name="Zhou J."/>
            <person name="Ni P."/>
            <person name="Dong W."/>
            <person name="Hu S."/>
            <person name="Zeng C."/>
            <person name="Zhang J."/>
            <person name="Zhang Y."/>
            <person name="Li R."/>
            <person name="Xu Z."/>
            <person name="Li S."/>
            <person name="Li X."/>
            <person name="Zheng H."/>
            <person name="Cong L."/>
            <person name="Lin L."/>
            <person name="Yin J."/>
            <person name="Geng J."/>
            <person name="Li G."/>
            <person name="Shi J."/>
            <person name="Liu J."/>
            <person name="Lv H."/>
            <person name="Li J."/>
            <person name="Wang J."/>
            <person name="Deng Y."/>
            <person name="Ran L."/>
            <person name="Shi X."/>
            <person name="Wang X."/>
            <person name="Wu Q."/>
            <person name="Li C."/>
            <person name="Ren X."/>
            <person name="Wang J."/>
            <person name="Wang X."/>
            <person name="Li D."/>
            <person name="Liu D."/>
            <person name="Zhang X."/>
            <person name="Ji Z."/>
            <person name="Zhao W."/>
            <person name="Sun Y."/>
            <person name="Zhang Z."/>
            <person name="Bao J."/>
            <person name="Han Y."/>
            <person name="Dong L."/>
            <person name="Ji J."/>
            <person name="Chen P."/>
            <person name="Wu S."/>
            <person name="Liu J."/>
            <person name="Xiao Y."/>
            <person name="Bu D."/>
            <person name="Tan J."/>
            <person name="Yang L."/>
            <person name="Ye C."/>
            <person name="Zhang J."/>
            <person name="Xu J."/>
            <person name="Zhou Y."/>
            <person name="Yu Y."/>
            <person name="Zhang B."/>
            <person name="Zhuang S."/>
            <person name="Wei H."/>
            <person name="Liu B."/>
            <person name="Lei M."/>
            <person name="Yu H."/>
            <person name="Li Y."/>
            <person name="Xu H."/>
            <person name="Wei S."/>
            <person name="He X."/>
            <person name="Fang L."/>
            <person name="Zhang Z."/>
            <person name="Zhang Y."/>
            <person name="Huang X."/>
            <person name="Su Z."/>
            <person name="Tong W."/>
            <person name="Li J."/>
            <person name="Tong Z."/>
            <person name="Li S."/>
            <person name="Ye J."/>
            <person name="Wang L."/>
            <person name="Fang L."/>
            <person name="Lei T."/>
            <person name="Chen C.-S."/>
            <person name="Chen H.-C."/>
            <person name="Xu Z."/>
            <person name="Li H."/>
            <person name="Huang H."/>
            <person name="Zhang F."/>
            <person name="Xu H."/>
            <person name="Li N."/>
            <person name="Zhao C."/>
            <person name="Li S."/>
            <person name="Dong L."/>
            <person name="Huang Y."/>
            <person name="Li L."/>
            <person name="Xi Y."/>
            <person name="Qi Q."/>
            <person name="Li W."/>
            <person name="Zhang B."/>
            <person name="Hu W."/>
            <person name="Zhang Y."/>
            <person name="Tian X."/>
            <person name="Jiao Y."/>
            <person name="Liang X."/>
            <person name="Jin J."/>
            <person name="Gao L."/>
            <person name="Zheng W."/>
            <person name="Hao B."/>
            <person name="Liu S.-M."/>
            <person name="Wang W."/>
            <person name="Yuan L."/>
            <person name="Cao M."/>
            <person name="McDermott J."/>
            <person name="Samudrala R."/>
            <person name="Wang J."/>
            <person name="Wong G.K.-S."/>
            <person name="Yang H."/>
        </authorList>
    </citation>
    <scope>NUCLEOTIDE SEQUENCE [LARGE SCALE GENOMIC DNA]</scope>
    <source>
        <strain>cv. 93-11</strain>
    </source>
</reference>
<keyword id="KW-0007">Acetylation</keyword>
<keyword id="KW-0249">Electron transport</keyword>
<keyword id="KW-0349">Heme</keyword>
<keyword id="KW-0408">Iron</keyword>
<keyword id="KW-0479">Metal-binding</keyword>
<keyword id="KW-0488">Methylation</keyword>
<keyword id="KW-0496">Mitochondrion</keyword>
<keyword id="KW-1185">Reference proteome</keyword>
<keyword id="KW-0679">Respiratory chain</keyword>
<keyword id="KW-0813">Transport</keyword>
<sequence>MASFSEAPPGNPKAGEKIFKTKCAQCHTVDKGAGHKQGPNLNGLFGRQSGTTPGYSYSTANKNMAVIWEENTLYDYLLNPKKYIPGTKMVFPGLKKPQERADLISYLKEATS</sequence>
<proteinExistence type="inferred from homology"/>
<accession>A2Y4S9</accession>
<accession>P00055</accession>
<accession>Q6L4Z1</accession>
<organism>
    <name type="scientific">Oryza sativa subsp. indica</name>
    <name type="common">Rice</name>
    <dbReference type="NCBI Taxonomy" id="39946"/>
    <lineage>
        <taxon>Eukaryota</taxon>
        <taxon>Viridiplantae</taxon>
        <taxon>Streptophyta</taxon>
        <taxon>Embryophyta</taxon>
        <taxon>Tracheophyta</taxon>
        <taxon>Spermatophyta</taxon>
        <taxon>Magnoliopsida</taxon>
        <taxon>Liliopsida</taxon>
        <taxon>Poales</taxon>
        <taxon>Poaceae</taxon>
        <taxon>BOP clade</taxon>
        <taxon>Oryzoideae</taxon>
        <taxon>Oryzeae</taxon>
        <taxon>Oryzinae</taxon>
        <taxon>Oryza</taxon>
        <taxon>Oryza sativa</taxon>
    </lineage>
</organism>